<keyword id="KW-0150">Chloroplast</keyword>
<keyword id="KW-0934">Plastid</keyword>
<keyword id="KW-1185">Reference proteome</keyword>
<keyword id="KW-0808">Transferase</keyword>
<keyword id="KW-0809">Transit peptide</keyword>
<evidence type="ECO:0000255" key="1"/>
<evidence type="ECO:0000269" key="2">
    <source>
    </source>
</evidence>
<evidence type="ECO:0000305" key="3"/>
<gene>
    <name type="ordered locus">At1g77060</name>
    <name type="ORF">F22K20.14</name>
</gene>
<reference key="1">
    <citation type="journal article" date="2000" name="Nature">
        <title>Sequence and analysis of chromosome 1 of the plant Arabidopsis thaliana.</title>
        <authorList>
            <person name="Theologis A."/>
            <person name="Ecker J.R."/>
            <person name="Palm C.J."/>
            <person name="Federspiel N.A."/>
            <person name="Kaul S."/>
            <person name="White O."/>
            <person name="Alonso J."/>
            <person name="Altafi H."/>
            <person name="Araujo R."/>
            <person name="Bowman C.L."/>
            <person name="Brooks S.Y."/>
            <person name="Buehler E."/>
            <person name="Chan A."/>
            <person name="Chao Q."/>
            <person name="Chen H."/>
            <person name="Cheuk R.F."/>
            <person name="Chin C.W."/>
            <person name="Chung M.K."/>
            <person name="Conn L."/>
            <person name="Conway A.B."/>
            <person name="Conway A.R."/>
            <person name="Creasy T.H."/>
            <person name="Dewar K."/>
            <person name="Dunn P."/>
            <person name="Etgu P."/>
            <person name="Feldblyum T.V."/>
            <person name="Feng J.-D."/>
            <person name="Fong B."/>
            <person name="Fujii C.Y."/>
            <person name="Gill J.E."/>
            <person name="Goldsmith A.D."/>
            <person name="Haas B."/>
            <person name="Hansen N.F."/>
            <person name="Hughes B."/>
            <person name="Huizar L."/>
            <person name="Hunter J.L."/>
            <person name="Jenkins J."/>
            <person name="Johnson-Hopson C."/>
            <person name="Khan S."/>
            <person name="Khaykin E."/>
            <person name="Kim C.J."/>
            <person name="Koo H.L."/>
            <person name="Kremenetskaia I."/>
            <person name="Kurtz D.B."/>
            <person name="Kwan A."/>
            <person name="Lam B."/>
            <person name="Langin-Hooper S."/>
            <person name="Lee A."/>
            <person name="Lee J.M."/>
            <person name="Lenz C.A."/>
            <person name="Li J.H."/>
            <person name="Li Y.-P."/>
            <person name="Lin X."/>
            <person name="Liu S.X."/>
            <person name="Liu Z.A."/>
            <person name="Luros J.S."/>
            <person name="Maiti R."/>
            <person name="Marziali A."/>
            <person name="Militscher J."/>
            <person name="Miranda M."/>
            <person name="Nguyen M."/>
            <person name="Nierman W.C."/>
            <person name="Osborne B.I."/>
            <person name="Pai G."/>
            <person name="Peterson J."/>
            <person name="Pham P.K."/>
            <person name="Rizzo M."/>
            <person name="Rooney T."/>
            <person name="Rowley D."/>
            <person name="Sakano H."/>
            <person name="Salzberg S.L."/>
            <person name="Schwartz J.R."/>
            <person name="Shinn P."/>
            <person name="Southwick A.M."/>
            <person name="Sun H."/>
            <person name="Tallon L.J."/>
            <person name="Tambunga G."/>
            <person name="Toriumi M.J."/>
            <person name="Town C.D."/>
            <person name="Utterback T."/>
            <person name="Van Aken S."/>
            <person name="Vaysberg M."/>
            <person name="Vysotskaia V.S."/>
            <person name="Walker M."/>
            <person name="Wu D."/>
            <person name="Yu G."/>
            <person name="Fraser C.M."/>
            <person name="Venter J.C."/>
            <person name="Davis R.W."/>
        </authorList>
    </citation>
    <scope>NUCLEOTIDE SEQUENCE [LARGE SCALE GENOMIC DNA]</scope>
    <source>
        <strain>cv. Columbia</strain>
    </source>
</reference>
<reference key="2">
    <citation type="journal article" date="2017" name="Plant J.">
        <title>Araport11: a complete reannotation of the Arabidopsis thaliana reference genome.</title>
        <authorList>
            <person name="Cheng C.Y."/>
            <person name="Krishnakumar V."/>
            <person name="Chan A.P."/>
            <person name="Thibaud-Nissen F."/>
            <person name="Schobel S."/>
            <person name="Town C.D."/>
        </authorList>
    </citation>
    <scope>GENOME REANNOTATION</scope>
    <source>
        <strain>cv. Columbia</strain>
    </source>
</reference>
<reference key="3">
    <citation type="submission" date="2002-03" db="EMBL/GenBank/DDBJ databases">
        <title>Full-length cDNA from Arabidopsis thaliana.</title>
        <authorList>
            <person name="Brover V.V."/>
            <person name="Troukhan M.E."/>
            <person name="Alexandrov N.A."/>
            <person name="Lu Y.-P."/>
            <person name="Flavell R.B."/>
            <person name="Feldmann K.A."/>
        </authorList>
    </citation>
    <scope>NUCLEOTIDE SEQUENCE [LARGE SCALE MRNA]</scope>
</reference>
<reference key="4">
    <citation type="journal article" date="2008" name="PLoS ONE">
        <title>Sorting signals, N-terminal modifications and abundance of the chloroplast proteome.</title>
        <authorList>
            <person name="Zybailov B."/>
            <person name="Rutschow H."/>
            <person name="Friso G."/>
            <person name="Rudella A."/>
            <person name="Emanuelsson O."/>
            <person name="Sun Q."/>
            <person name="van Wijk K.J."/>
        </authorList>
    </citation>
    <scope>IDENTIFICATION BY MASS SPECTROMETRY</scope>
    <scope>SUBCELLULAR LOCATION [LARGE SCALE ANALYSIS]</scope>
</reference>
<feature type="transit peptide" description="Chloroplast" evidence="1">
    <location>
        <begin position="1"/>
        <end position="30"/>
    </location>
</feature>
<feature type="chain" id="PRO_0000068822" description="Carboxyvinyl-carboxyphosphonate phosphorylmutase, chloroplastic">
    <location>
        <begin position="31"/>
        <end position="339"/>
    </location>
</feature>
<dbReference type="EC" id="2.7.8.23"/>
<dbReference type="EMBL" id="AC002291">
    <property type="protein sequence ID" value="AAC00621.1"/>
    <property type="status" value="ALT_INIT"/>
    <property type="molecule type" value="Genomic_DNA"/>
</dbReference>
<dbReference type="EMBL" id="CP002684">
    <property type="protein sequence ID" value="AEE35928.1"/>
    <property type="molecule type" value="Genomic_DNA"/>
</dbReference>
<dbReference type="EMBL" id="AY084963">
    <property type="protein sequence ID" value="AAM61524.1"/>
    <property type="molecule type" value="mRNA"/>
</dbReference>
<dbReference type="PIR" id="E96799">
    <property type="entry name" value="E96799"/>
</dbReference>
<dbReference type="RefSeq" id="NP_565148.1">
    <property type="nucleotide sequence ID" value="NM_106356.3"/>
</dbReference>
<dbReference type="SMR" id="O49290"/>
<dbReference type="FunCoup" id="O49290">
    <property type="interactions" value="287"/>
</dbReference>
<dbReference type="STRING" id="3702.O49290"/>
<dbReference type="PaxDb" id="3702-AT1G77060.1"/>
<dbReference type="ProteomicsDB" id="220409"/>
<dbReference type="EnsemblPlants" id="AT1G77060.1">
    <property type="protein sequence ID" value="AT1G77060.1"/>
    <property type="gene ID" value="AT1G77060"/>
</dbReference>
<dbReference type="GeneID" id="844041"/>
<dbReference type="Gramene" id="AT1G77060.1">
    <property type="protein sequence ID" value="AT1G77060.1"/>
    <property type="gene ID" value="AT1G77060"/>
</dbReference>
<dbReference type="KEGG" id="ath:AT1G77060"/>
<dbReference type="Araport" id="AT1G77060"/>
<dbReference type="TAIR" id="AT1G77060"/>
<dbReference type="eggNOG" id="KOG1260">
    <property type="taxonomic scope" value="Eukaryota"/>
</dbReference>
<dbReference type="HOGENOM" id="CLU_027389_3_1_1"/>
<dbReference type="InParanoid" id="O49290"/>
<dbReference type="OMA" id="DRIGYHA"/>
<dbReference type="OrthoDB" id="429143at2759"/>
<dbReference type="PhylomeDB" id="O49290"/>
<dbReference type="BioCyc" id="ARA:AT1G77060-MONOMER"/>
<dbReference type="PRO" id="PR:O49290"/>
<dbReference type="Proteomes" id="UP000006548">
    <property type="component" value="Chromosome 1"/>
</dbReference>
<dbReference type="ExpressionAtlas" id="O49290">
    <property type="expression patterns" value="baseline and differential"/>
</dbReference>
<dbReference type="GO" id="GO:0009507">
    <property type="term" value="C:chloroplast"/>
    <property type="evidence" value="ECO:0007005"/>
    <property type="project" value="TAIR"/>
</dbReference>
<dbReference type="GO" id="GO:0009570">
    <property type="term" value="C:chloroplast stroma"/>
    <property type="evidence" value="ECO:0007005"/>
    <property type="project" value="TAIR"/>
</dbReference>
<dbReference type="GO" id="GO:0008807">
    <property type="term" value="F:carboxyvinyl-carboxyphosphonate phosphorylmutase activity"/>
    <property type="evidence" value="ECO:0007669"/>
    <property type="project" value="UniProtKB-EC"/>
</dbReference>
<dbReference type="GO" id="GO:0016833">
    <property type="term" value="F:oxo-acid-lyase activity"/>
    <property type="evidence" value="ECO:0007669"/>
    <property type="project" value="UniProtKB-ARBA"/>
</dbReference>
<dbReference type="CDD" id="cd00377">
    <property type="entry name" value="ICL_PEPM"/>
    <property type="match status" value="1"/>
</dbReference>
<dbReference type="FunFam" id="3.20.20.60:FF:000009">
    <property type="entry name" value="2-methylisocitrate lyase"/>
    <property type="match status" value="1"/>
</dbReference>
<dbReference type="Gene3D" id="3.20.20.60">
    <property type="entry name" value="Phosphoenolpyruvate-binding domains"/>
    <property type="match status" value="1"/>
</dbReference>
<dbReference type="InterPro" id="IPR039556">
    <property type="entry name" value="ICL/PEPM"/>
</dbReference>
<dbReference type="InterPro" id="IPR018523">
    <property type="entry name" value="Isocitrate_lyase_ph_CS"/>
</dbReference>
<dbReference type="InterPro" id="IPR015813">
    <property type="entry name" value="Pyrv/PenolPyrv_kinase-like_dom"/>
</dbReference>
<dbReference type="InterPro" id="IPR040442">
    <property type="entry name" value="Pyrv_kinase-like_dom_sf"/>
</dbReference>
<dbReference type="PANTHER" id="PTHR42905:SF5">
    <property type="entry name" value="CARBOXYVINYL-CARBOXYPHOSPHONATE PHOSPHORYLMUTASE, CHLOROPLASTIC"/>
    <property type="match status" value="1"/>
</dbReference>
<dbReference type="PANTHER" id="PTHR42905">
    <property type="entry name" value="PHOSPHOENOLPYRUVATE CARBOXYLASE"/>
    <property type="match status" value="1"/>
</dbReference>
<dbReference type="Pfam" id="PF13714">
    <property type="entry name" value="PEP_mutase"/>
    <property type="match status" value="1"/>
</dbReference>
<dbReference type="SUPFAM" id="SSF51621">
    <property type="entry name" value="Phosphoenolpyruvate/pyruvate domain"/>
    <property type="match status" value="1"/>
</dbReference>
<dbReference type="PROSITE" id="PS00161">
    <property type="entry name" value="ISOCITRATE_LYASE"/>
    <property type="match status" value="1"/>
</dbReference>
<protein>
    <recommendedName>
        <fullName>Carboxyvinyl-carboxyphosphonate phosphorylmutase, chloroplastic</fullName>
        <ecNumber>2.7.8.23</ecNumber>
    </recommendedName>
    <alternativeName>
        <fullName>Carboxyphosphonoenolpyruvate phosphonomutase</fullName>
        <shortName>CPEP phosphonomutase</shortName>
    </alternativeName>
</protein>
<sequence length="339" mass="36566">MSMLMAVKTTSLCCSSLNLTASPTFRRNPRAARLVNPTARIQTRFHRLIEEQGIVLMPGCYDALSAAIVQQTGFSAGFISGYALSASLLGKPDFGLLTPPEMAATARSVCASAPNIPIIADADTGGGNALNIQRTVKDLIAAGAAGCFLEDQAWPKKCGHMRGKQVIPAEEHAAKIASARDAIGDSDFFLVARTDVRATSAKSGLEDAIARVNLYMEAGADASFVEAPRDDDELKEIGKRTKGYRVCNMIEGGVTPLHTPDELKEMGFHLIVHPLTALYASTRALVDVLKTLKENGSTRDHLQKMATFEEFNSLVDLDSWFELEARYSNLRNALGTTKS</sequence>
<proteinExistence type="evidence at protein level"/>
<organism>
    <name type="scientific">Arabidopsis thaliana</name>
    <name type="common">Mouse-ear cress</name>
    <dbReference type="NCBI Taxonomy" id="3702"/>
    <lineage>
        <taxon>Eukaryota</taxon>
        <taxon>Viridiplantae</taxon>
        <taxon>Streptophyta</taxon>
        <taxon>Embryophyta</taxon>
        <taxon>Tracheophyta</taxon>
        <taxon>Spermatophyta</taxon>
        <taxon>Magnoliopsida</taxon>
        <taxon>eudicotyledons</taxon>
        <taxon>Gunneridae</taxon>
        <taxon>Pentapetalae</taxon>
        <taxon>rosids</taxon>
        <taxon>malvids</taxon>
        <taxon>Brassicales</taxon>
        <taxon>Brassicaceae</taxon>
        <taxon>Camelineae</taxon>
        <taxon>Arabidopsis</taxon>
    </lineage>
</organism>
<comment type="catalytic activity">
    <reaction>
        <text>1-carboxyvinyl carboxyphosphonate + H(+) = 3-(hydrohydroxyphosphoryl)pyruvate + CO2</text>
        <dbReference type="Rhea" id="RHEA:14045"/>
        <dbReference type="ChEBI" id="CHEBI:15378"/>
        <dbReference type="ChEBI" id="CHEBI:16526"/>
        <dbReference type="ChEBI" id="CHEBI:57999"/>
        <dbReference type="ChEBI" id="CHEBI:58348"/>
        <dbReference type="EC" id="2.7.8.23"/>
    </reaction>
</comment>
<comment type="subcellular location">
    <subcellularLocation>
        <location evidence="2">Plastid</location>
        <location evidence="2">Chloroplast</location>
    </subcellularLocation>
</comment>
<comment type="similarity">
    <text evidence="3">Belongs to the isocitrate lyase/PEP mutase superfamily.</text>
</comment>
<comment type="sequence caution" evidence="3">
    <conflict type="erroneous initiation">
        <sequence resource="EMBL-CDS" id="AAC00621"/>
    </conflict>
</comment>
<name>CPPM_ARATH</name>
<accession>O49290</accession>
<accession>Q8LFA2</accession>